<accession>Q2QR07</accession>
<accession>A0A0P0YA07</accession>
<sequence length="296" mass="31925">MAGLSLQHPWAFAFGLLGNLISFTTYLAPIPTFYRIYKSKSTEGFQSVPYVVALFSAMLWIFYALIKSNEALLITINAAGCVIETIYIVMYLAYAPKKAKVFTTKILLLLNVGVFGVILLLTLLLSHGEQRVVSLGWVCVAFSVSVFVAPLSIIKRVIQSRSVEYMPFSLSLTLTLSAVVWFLYGLLIKDKYVALPNILGFTFGVVQMGLYVFYMNATPVAGEGKEGKGKLAAAEELPVVVNVGKLAAATPDRSTGAVHVHPVPRSCAAEAAAAEPEVLVDIPPPPPPRAVEVAAV</sequence>
<evidence type="ECO:0000250" key="1">
    <source>
        <dbReference type="UniProtKB" id="Q8L9J7"/>
    </source>
</evidence>
<evidence type="ECO:0000255" key="2"/>
<evidence type="ECO:0000269" key="3">
    <source>
    </source>
</evidence>
<evidence type="ECO:0000303" key="4">
    <source>
    </source>
</evidence>
<evidence type="ECO:0000305" key="5"/>
<protein>
    <recommendedName>
        <fullName>Bidirectional sugar transporter SWEET13</fullName>
        <shortName>OsSWEET13</shortName>
    </recommendedName>
</protein>
<keyword id="KW-1003">Cell membrane</keyword>
<keyword id="KW-0472">Membrane</keyword>
<keyword id="KW-1185">Reference proteome</keyword>
<keyword id="KW-0677">Repeat</keyword>
<keyword id="KW-0762">Sugar transport</keyword>
<keyword id="KW-0812">Transmembrane</keyword>
<keyword id="KW-1133">Transmembrane helix</keyword>
<keyword id="KW-0813">Transport</keyword>
<comment type="function">
    <text evidence="1">Mediates both low-affinity uptake and efflux of sugar across the plasma membrane.</text>
</comment>
<comment type="function">
    <text evidence="3 4">Confers blight susceptibility (PubMed:25988582). Confers TAL effector-mediated susceptibility to Xanthomonas oryzae pv. oryzae (PubMed:23879865).</text>
</comment>
<comment type="subunit">
    <text evidence="1">Forms homooligomers and/or heterooligomers.</text>
</comment>
<comment type="subcellular location">
    <subcellularLocation>
        <location evidence="1">Cell membrane</location>
        <topology evidence="1">Multi-pass membrane protein</topology>
    </subcellularLocation>
</comment>
<comment type="induction">
    <text evidence="3">By the X.oryzae pv. oryzae (Xoo) transcription activator-like effector (TALe) proteins (artificial TAL effectors).</text>
</comment>
<comment type="similarity">
    <text evidence="5">Belongs to the SWEET sugar transporter family.</text>
</comment>
<proteinExistence type="evidence at transcript level"/>
<dbReference type="EMBL" id="DP000011">
    <property type="protein sequence ID" value="ABA98216.1"/>
    <property type="molecule type" value="Genomic_DNA"/>
</dbReference>
<dbReference type="EMBL" id="AP008218">
    <property type="status" value="NOT_ANNOTATED_CDS"/>
    <property type="molecule type" value="Genomic_DNA"/>
</dbReference>
<dbReference type="EMBL" id="AP014968">
    <property type="protein sequence ID" value="BAT17113.1"/>
    <property type="molecule type" value="Genomic_DNA"/>
</dbReference>
<dbReference type="EMBL" id="CM000149">
    <property type="protein sequence ID" value="EAZ20456.1"/>
    <property type="molecule type" value="Genomic_DNA"/>
</dbReference>
<dbReference type="EMBL" id="AK242853">
    <property type="protein sequence ID" value="BAH01364.1"/>
    <property type="molecule type" value="mRNA"/>
</dbReference>
<dbReference type="RefSeq" id="XP_015618459.1">
    <property type="nucleotide sequence ID" value="XM_015762973.1"/>
</dbReference>
<dbReference type="SMR" id="Q2QR07"/>
<dbReference type="FunCoup" id="Q2QR07">
    <property type="interactions" value="461"/>
</dbReference>
<dbReference type="PaxDb" id="39947-Q2QR07"/>
<dbReference type="EnsemblPlants" id="Os12t0476200-01">
    <property type="protein sequence ID" value="Os12t0476200-01"/>
    <property type="gene ID" value="Os12g0476200"/>
</dbReference>
<dbReference type="Gramene" id="Os12t0476200-01">
    <property type="protein sequence ID" value="Os12t0476200-01"/>
    <property type="gene ID" value="Os12g0476200"/>
</dbReference>
<dbReference type="eggNOG" id="KOG1623">
    <property type="taxonomic scope" value="Eukaryota"/>
</dbReference>
<dbReference type="HOGENOM" id="CLU_048643_4_0_1"/>
<dbReference type="InParanoid" id="Q2QR07"/>
<dbReference type="OMA" id="IGTGPQQ"/>
<dbReference type="OrthoDB" id="409725at2759"/>
<dbReference type="Proteomes" id="UP000000763">
    <property type="component" value="Chromosome 12"/>
</dbReference>
<dbReference type="Proteomes" id="UP000007752">
    <property type="component" value="Chromosome 12"/>
</dbReference>
<dbReference type="Proteomes" id="UP000059680">
    <property type="component" value="Chromosome 12"/>
</dbReference>
<dbReference type="GO" id="GO:0016020">
    <property type="term" value="C:membrane"/>
    <property type="evidence" value="ECO:0000318"/>
    <property type="project" value="GO_Central"/>
</dbReference>
<dbReference type="GO" id="GO:0005886">
    <property type="term" value="C:plasma membrane"/>
    <property type="evidence" value="ECO:0000250"/>
    <property type="project" value="UniProtKB"/>
</dbReference>
<dbReference type="GO" id="GO:0051119">
    <property type="term" value="F:sugar transmembrane transporter activity"/>
    <property type="evidence" value="ECO:0000250"/>
    <property type="project" value="UniProtKB"/>
</dbReference>
<dbReference type="GO" id="GO:0008643">
    <property type="term" value="P:carbohydrate transport"/>
    <property type="evidence" value="ECO:0000318"/>
    <property type="project" value="GO_Central"/>
</dbReference>
<dbReference type="FunFam" id="1.20.1280.290:FF:000001">
    <property type="entry name" value="Bidirectional sugar transporter SWEET"/>
    <property type="match status" value="1"/>
</dbReference>
<dbReference type="FunFam" id="1.20.1280.290:FF:000003">
    <property type="entry name" value="Bidirectional sugar transporter SWEET"/>
    <property type="match status" value="1"/>
</dbReference>
<dbReference type="Gene3D" id="1.20.1280.290">
    <property type="match status" value="2"/>
</dbReference>
<dbReference type="InterPro" id="IPR047664">
    <property type="entry name" value="SWEET"/>
</dbReference>
<dbReference type="InterPro" id="IPR004316">
    <property type="entry name" value="SWEET_rpt"/>
</dbReference>
<dbReference type="PANTHER" id="PTHR10791:SF22">
    <property type="entry name" value="BIDIRECTIONAL SUGAR TRANSPORTER SWEET11"/>
    <property type="match status" value="1"/>
</dbReference>
<dbReference type="PANTHER" id="PTHR10791">
    <property type="entry name" value="RAG1-ACTIVATING PROTEIN 1"/>
    <property type="match status" value="1"/>
</dbReference>
<dbReference type="Pfam" id="PF03083">
    <property type="entry name" value="MtN3_slv"/>
    <property type="match status" value="2"/>
</dbReference>
<name>SWT13_ORYSJ</name>
<reference key="1">
    <citation type="journal article" date="2005" name="BMC Biol.">
        <title>The sequence of rice chromosomes 11 and 12, rich in disease resistance genes and recent gene duplications.</title>
        <authorList>
            <consortium name="The rice chromosomes 11 and 12 sequencing consortia"/>
        </authorList>
    </citation>
    <scope>NUCLEOTIDE SEQUENCE [LARGE SCALE GENOMIC DNA]</scope>
    <source>
        <strain>cv. Nipponbare</strain>
    </source>
</reference>
<reference key="2">
    <citation type="journal article" date="2005" name="Nature">
        <title>The map-based sequence of the rice genome.</title>
        <authorList>
            <consortium name="International rice genome sequencing project (IRGSP)"/>
        </authorList>
    </citation>
    <scope>NUCLEOTIDE SEQUENCE [LARGE SCALE GENOMIC DNA]</scope>
    <source>
        <strain>cv. Nipponbare</strain>
    </source>
</reference>
<reference key="3">
    <citation type="journal article" date="2008" name="Nucleic Acids Res.">
        <title>The rice annotation project database (RAP-DB): 2008 update.</title>
        <authorList>
            <consortium name="The rice annotation project (RAP)"/>
        </authorList>
    </citation>
    <scope>GENOME REANNOTATION</scope>
    <source>
        <strain>cv. Nipponbare</strain>
    </source>
</reference>
<reference key="4">
    <citation type="journal article" date="2013" name="Rice">
        <title>Improvement of the Oryza sativa Nipponbare reference genome using next generation sequence and optical map data.</title>
        <authorList>
            <person name="Kawahara Y."/>
            <person name="de la Bastide M."/>
            <person name="Hamilton J.P."/>
            <person name="Kanamori H."/>
            <person name="McCombie W.R."/>
            <person name="Ouyang S."/>
            <person name="Schwartz D.C."/>
            <person name="Tanaka T."/>
            <person name="Wu J."/>
            <person name="Zhou S."/>
            <person name="Childs K.L."/>
            <person name="Davidson R.M."/>
            <person name="Lin H."/>
            <person name="Quesada-Ocampo L."/>
            <person name="Vaillancourt B."/>
            <person name="Sakai H."/>
            <person name="Lee S.S."/>
            <person name="Kim J."/>
            <person name="Numa H."/>
            <person name="Itoh T."/>
            <person name="Buell C.R."/>
            <person name="Matsumoto T."/>
        </authorList>
    </citation>
    <scope>GENOME REANNOTATION</scope>
    <source>
        <strain>cv. Nipponbare</strain>
    </source>
</reference>
<reference key="5">
    <citation type="journal article" date="2005" name="PLoS Biol.">
        <title>The genomes of Oryza sativa: a history of duplications.</title>
        <authorList>
            <person name="Yu J."/>
            <person name="Wang J."/>
            <person name="Lin W."/>
            <person name="Li S."/>
            <person name="Li H."/>
            <person name="Zhou J."/>
            <person name="Ni P."/>
            <person name="Dong W."/>
            <person name="Hu S."/>
            <person name="Zeng C."/>
            <person name="Zhang J."/>
            <person name="Zhang Y."/>
            <person name="Li R."/>
            <person name="Xu Z."/>
            <person name="Li S."/>
            <person name="Li X."/>
            <person name="Zheng H."/>
            <person name="Cong L."/>
            <person name="Lin L."/>
            <person name="Yin J."/>
            <person name="Geng J."/>
            <person name="Li G."/>
            <person name="Shi J."/>
            <person name="Liu J."/>
            <person name="Lv H."/>
            <person name="Li J."/>
            <person name="Wang J."/>
            <person name="Deng Y."/>
            <person name="Ran L."/>
            <person name="Shi X."/>
            <person name="Wang X."/>
            <person name="Wu Q."/>
            <person name="Li C."/>
            <person name="Ren X."/>
            <person name="Wang J."/>
            <person name="Wang X."/>
            <person name="Li D."/>
            <person name="Liu D."/>
            <person name="Zhang X."/>
            <person name="Ji Z."/>
            <person name="Zhao W."/>
            <person name="Sun Y."/>
            <person name="Zhang Z."/>
            <person name="Bao J."/>
            <person name="Han Y."/>
            <person name="Dong L."/>
            <person name="Ji J."/>
            <person name="Chen P."/>
            <person name="Wu S."/>
            <person name="Liu J."/>
            <person name="Xiao Y."/>
            <person name="Bu D."/>
            <person name="Tan J."/>
            <person name="Yang L."/>
            <person name="Ye C."/>
            <person name="Zhang J."/>
            <person name="Xu J."/>
            <person name="Zhou Y."/>
            <person name="Yu Y."/>
            <person name="Zhang B."/>
            <person name="Zhuang S."/>
            <person name="Wei H."/>
            <person name="Liu B."/>
            <person name="Lei M."/>
            <person name="Yu H."/>
            <person name="Li Y."/>
            <person name="Xu H."/>
            <person name="Wei S."/>
            <person name="He X."/>
            <person name="Fang L."/>
            <person name="Zhang Z."/>
            <person name="Zhang Y."/>
            <person name="Huang X."/>
            <person name="Su Z."/>
            <person name="Tong W."/>
            <person name="Li J."/>
            <person name="Tong Z."/>
            <person name="Li S."/>
            <person name="Ye J."/>
            <person name="Wang L."/>
            <person name="Fang L."/>
            <person name="Lei T."/>
            <person name="Chen C.-S."/>
            <person name="Chen H.-C."/>
            <person name="Xu Z."/>
            <person name="Li H."/>
            <person name="Huang H."/>
            <person name="Zhang F."/>
            <person name="Xu H."/>
            <person name="Li N."/>
            <person name="Zhao C."/>
            <person name="Li S."/>
            <person name="Dong L."/>
            <person name="Huang Y."/>
            <person name="Li L."/>
            <person name="Xi Y."/>
            <person name="Qi Q."/>
            <person name="Li W."/>
            <person name="Zhang B."/>
            <person name="Hu W."/>
            <person name="Zhang Y."/>
            <person name="Tian X."/>
            <person name="Jiao Y."/>
            <person name="Liang X."/>
            <person name="Jin J."/>
            <person name="Gao L."/>
            <person name="Zheng W."/>
            <person name="Hao B."/>
            <person name="Liu S.-M."/>
            <person name="Wang W."/>
            <person name="Yuan L."/>
            <person name="Cao M."/>
            <person name="McDermott J."/>
            <person name="Samudrala R."/>
            <person name="Wang J."/>
            <person name="Wong G.K.-S."/>
            <person name="Yang H."/>
        </authorList>
    </citation>
    <scope>NUCLEOTIDE SEQUENCE [LARGE SCALE GENOMIC DNA]</scope>
    <source>
        <strain>cv. Nipponbare</strain>
    </source>
</reference>
<reference key="6">
    <citation type="submission" date="2006-10" db="EMBL/GenBank/DDBJ databases">
        <title>Oryza sativa full length cDNA.</title>
        <authorList>
            <consortium name="The rice full-length cDNA consortium"/>
        </authorList>
    </citation>
    <scope>NUCLEOTIDE SEQUENCE [LARGE SCALE MRNA]</scope>
    <source>
        <strain>cv. Nipponbare</strain>
    </source>
</reference>
<reference key="7">
    <citation type="journal article" date="2010" name="Nature">
        <title>Sugar transporters for intercellular exchange and nutrition of pathogens.</title>
        <authorList>
            <person name="Chen L.-Q."/>
            <person name="Hou B.-H."/>
            <person name="Lalonde S."/>
            <person name="Takanaga H."/>
            <person name="Hartung M.L."/>
            <person name="Qu X.-Q."/>
            <person name="Guo W.-J."/>
            <person name="Kim J.-G."/>
            <person name="Underwood W."/>
            <person name="Chaudhuri B."/>
            <person name="Chermak D."/>
            <person name="Antony G."/>
            <person name="White F.F."/>
            <person name="Somerville S.C."/>
            <person name="Mudgett M.B."/>
            <person name="Frommer W.B."/>
        </authorList>
    </citation>
    <scope>GENE FAMILY</scope>
    <scope>NOMENCLATURE</scope>
</reference>
<reference key="8">
    <citation type="journal article" date="2013" name="New Phytol.">
        <title>Five phylogenetically close rice SWEET genes confer TAL effector-mediated susceptibility to Xanthomonas oryzae pv. oryzae.</title>
        <authorList>
            <person name="Streubel J."/>
            <person name="Pesce C."/>
            <person name="Hutin M."/>
            <person name="Koebnik R."/>
            <person name="Boch J."/>
            <person name="Szurek B."/>
        </authorList>
    </citation>
    <scope>FUNCTION</scope>
    <scope>INDUCTION BY TAL PROTEINS</scope>
    <source>
        <strain>cv. Nipponbare</strain>
    </source>
</reference>
<reference key="9">
    <citation type="journal article" date="2015" name="Curr. Opin. Plant Biol.">
        <title>SWEETs, transporters for intracellular and intercellular sugar translocation.</title>
        <authorList>
            <person name="Eom J.-S."/>
            <person name="Chen L.-Q."/>
            <person name="Sosso D."/>
            <person name="Julius B.T."/>
            <person name="Lin I.W."/>
            <person name="Qu X.-Q."/>
            <person name="Braun D.M."/>
            <person name="Frommer W.B."/>
        </authorList>
    </citation>
    <scope>REVIEW</scope>
</reference>
<organism>
    <name type="scientific">Oryza sativa subsp. japonica</name>
    <name type="common">Rice</name>
    <dbReference type="NCBI Taxonomy" id="39947"/>
    <lineage>
        <taxon>Eukaryota</taxon>
        <taxon>Viridiplantae</taxon>
        <taxon>Streptophyta</taxon>
        <taxon>Embryophyta</taxon>
        <taxon>Tracheophyta</taxon>
        <taxon>Spermatophyta</taxon>
        <taxon>Magnoliopsida</taxon>
        <taxon>Liliopsida</taxon>
        <taxon>Poales</taxon>
        <taxon>Poaceae</taxon>
        <taxon>BOP clade</taxon>
        <taxon>Oryzoideae</taxon>
        <taxon>Oryzeae</taxon>
        <taxon>Oryzinae</taxon>
        <taxon>Oryza</taxon>
        <taxon>Oryza sativa</taxon>
    </lineage>
</organism>
<feature type="chain" id="PRO_0000404135" description="Bidirectional sugar transporter SWEET13">
    <location>
        <begin position="1"/>
        <end position="296"/>
    </location>
</feature>
<feature type="topological domain" description="Extracellular" evidence="2">
    <location>
        <begin position="1"/>
        <end position="9"/>
    </location>
</feature>
<feature type="transmembrane region" description="Helical; Name=1" evidence="2">
    <location>
        <begin position="10"/>
        <end position="30"/>
    </location>
</feature>
<feature type="topological domain" description="Cytoplasmic" evidence="2">
    <location>
        <begin position="31"/>
        <end position="45"/>
    </location>
</feature>
<feature type="transmembrane region" description="Helical; Name=2" evidence="2">
    <location>
        <begin position="46"/>
        <end position="66"/>
    </location>
</feature>
<feature type="topological domain" description="Extracellular" evidence="2">
    <location>
        <begin position="67"/>
        <end position="71"/>
    </location>
</feature>
<feature type="transmembrane region" description="Helical; Name=3" evidence="2">
    <location>
        <begin position="72"/>
        <end position="92"/>
    </location>
</feature>
<feature type="topological domain" description="Cytoplasmic" evidence="2">
    <location>
        <begin position="93"/>
        <end position="105"/>
    </location>
</feature>
<feature type="transmembrane region" description="Helical; Name=4" evidence="2">
    <location>
        <begin position="106"/>
        <end position="126"/>
    </location>
</feature>
<feature type="topological domain" description="Extracellular" evidence="2">
    <location>
        <begin position="127"/>
        <end position="133"/>
    </location>
</feature>
<feature type="transmembrane region" description="Helical; Name=5" evidence="2">
    <location>
        <begin position="134"/>
        <end position="154"/>
    </location>
</feature>
<feature type="topological domain" description="Cytoplasmic" evidence="2">
    <location>
        <begin position="155"/>
        <end position="167"/>
    </location>
</feature>
<feature type="transmembrane region" description="Helical; Name=6" evidence="2">
    <location>
        <begin position="168"/>
        <end position="188"/>
    </location>
</feature>
<feature type="topological domain" description="Extracellular" evidence="2">
    <location>
        <begin position="189"/>
        <end position="192"/>
    </location>
</feature>
<feature type="transmembrane region" description="Helical; Name=7" evidence="2">
    <location>
        <begin position="193"/>
        <end position="213"/>
    </location>
</feature>
<feature type="topological domain" description="Cytoplasmic" evidence="2">
    <location>
        <begin position="214"/>
        <end position="296"/>
    </location>
</feature>
<feature type="domain" description="MtN3/slv 1">
    <location>
        <begin position="13"/>
        <end position="98"/>
    </location>
</feature>
<feature type="domain" description="MtN3/slv 2">
    <location>
        <begin position="134"/>
        <end position="217"/>
    </location>
</feature>
<gene>
    <name type="primary">SWEET13</name>
    <name type="ordered locus">Os12g0476200</name>
    <name type="ordered locus">LOC_Os12g29220</name>
    <name type="ORF">OsJ_36063</name>
</gene>